<comment type="function">
    <text evidence="1 2">Part of the dynactin complex that activates the molecular motor dynein for ultra-processive transport along microtubules. In the dynactin soulder domain, binds the ACTR1A filament and acts as a molecular ruler to determine the length (By similarity). Modulates cytoplasmic dynein binding to an organelle, and plays a role in prometaphase chromosome alignment and spindle organization during mitosis. Involved in anchoring microtubules to centrosomes. May play a role in synapse formation during brain development (By similarity).</text>
</comment>
<comment type="subunit">
    <text evidence="1 2 5 8 9">Subunit of dynactin, a multiprotein complex part of a tripartite complex with dynein and a adapter, such as BICDL1, BICD2 or HOOK3. The dynactin complex is built around ACTR1A/ACTB filament and consists of an actin-related filament composed of a shoulder domain, a pointed end and a barbed end. Its length is defined by its flexible shoulder domain. The soulder is composed of 2 DCTN1 subunits, 4 DCTN2 and 2 DCTN3. The 4 DCNT2 (via N-terminus) bind the ACTR1A filament and act as molecular rulers to determine the length. The pointed end is important for binding dynein-dynactin cargo adapters and consists of 4 subunits: ACTR10, DCNT4, DCTN5 and DCTN6. The barbed end is composed of a CAPZA1:CAPZB heterodimers, which binds ACTR1A/ACTB filament and dynactin and stabilizes dynactin (By similarity). Interacts with BICD2 and CEP135 (By similarity). Interacts with DYNAP (PubMed:20978158). Interacts with ECPAS (PubMed:20682791). Interacts with MAPRE1 (PubMed:10226031).</text>
</comment>
<comment type="interaction">
    <interactant intactId="EBI-715074">
        <id>Q13561</id>
    </interactant>
    <interactant intactId="EBI-11096309">
        <id>Q9NYB9-2</id>
        <label>ABI2</label>
    </interactant>
    <organismsDiffer>false</organismsDiffer>
    <experiments>3</experiments>
</comment>
<comment type="interaction">
    <interactant intactId="EBI-715074">
        <id>Q13561</id>
    </interactant>
    <interactant intactId="EBI-77613">
        <id>P05067</id>
        <label>APP</label>
    </interactant>
    <organismsDiffer>false</organismsDiffer>
    <experiments>3</experiments>
</comment>
<comment type="interaction">
    <interactant intactId="EBI-715074">
        <id>Q13561</id>
    </interactant>
    <interactant intactId="EBI-348630">
        <id>P78537</id>
        <label>BLOC1S1</label>
    </interactant>
    <organismsDiffer>false</organismsDiffer>
    <experiments>3</experiments>
</comment>
<comment type="interaction">
    <interactant intactId="EBI-715074">
        <id>Q13561</id>
    </interactant>
    <interactant intactId="EBI-465872">
        <id>Q6QNY1</id>
        <label>BLOC1S2</label>
    </interactant>
    <organismsDiffer>false</organismsDiffer>
    <experiments>3</experiments>
</comment>
<comment type="interaction">
    <interactant intactId="EBI-715074">
        <id>Q13561</id>
    </interactant>
    <interactant intactId="EBI-465781">
        <id>Q9UL45</id>
        <label>BLOC1S6</label>
    </interactant>
    <organismsDiffer>false</organismsDiffer>
    <experiments>3</experiments>
</comment>
<comment type="interaction">
    <interactant intactId="EBI-715074">
        <id>Q13561</id>
    </interactant>
    <interactant intactId="EBI-10193358">
        <id>Q96GS4</id>
        <label>BORCS6</label>
    </interactant>
    <organismsDiffer>false</organismsDiffer>
    <experiments>4</experiments>
</comment>
<comment type="interaction">
    <interactant intactId="EBI-715074">
        <id>Q13561</id>
    </interactant>
    <interactant intactId="EBI-2548868">
        <id>P0C7W6</id>
        <label>CCDC172</label>
    </interactant>
    <organismsDiffer>false</organismsDiffer>
    <experiments>4</experiments>
</comment>
<comment type="interaction">
    <interactant intactId="EBI-715074">
        <id>Q13561</id>
    </interactant>
    <interactant intactId="EBI-1003700">
        <id>Q9H3R5</id>
        <label>CENPH</label>
    </interactant>
    <organismsDiffer>false</organismsDiffer>
    <experiments>5</experiments>
</comment>
<comment type="interaction">
    <interactant intactId="EBI-715074">
        <id>Q13561</id>
    </interactant>
    <interactant intactId="EBI-744115">
        <id>Q9C0F1</id>
        <label>CEP44</label>
    </interactant>
    <organismsDiffer>false</organismsDiffer>
    <experiments>4</experiments>
</comment>
<comment type="interaction">
    <interactant intactId="EBI-715074">
        <id>Q13561</id>
    </interactant>
    <interactant intactId="EBI-9091495">
        <id>Q96JB2-2</id>
        <label>COG3</label>
    </interactant>
    <organismsDiffer>false</organismsDiffer>
    <experiments>3</experiments>
</comment>
<comment type="interaction">
    <interactant intactId="EBI-715074">
        <id>Q13561</id>
    </interactant>
    <interactant intactId="EBI-715074">
        <id>Q13561</id>
        <label>DCTN2</label>
    </interactant>
    <organismsDiffer>false</organismsDiffer>
    <experiments>4</experiments>
</comment>
<comment type="interaction">
    <interactant intactId="EBI-715074">
        <id>Q13561</id>
    </interactant>
    <interactant intactId="EBI-448167">
        <id>P24522</id>
        <label>GADD45A</label>
    </interactant>
    <organismsDiffer>false</organismsDiffer>
    <experiments>7</experiments>
</comment>
<comment type="interaction">
    <interactant intactId="EBI-715074">
        <id>Q13561</id>
    </interactant>
    <interactant intactId="EBI-448202">
        <id>O95257</id>
        <label>GADD45G</label>
    </interactant>
    <organismsDiffer>false</organismsDiffer>
    <experiments>5</experiments>
</comment>
<comment type="interaction">
    <interactant intactId="EBI-715074">
        <id>Q13561</id>
    </interactant>
    <interactant intactId="EBI-2514791">
        <id>Q96CS2</id>
        <label>HAUS1</label>
    </interactant>
    <organismsDiffer>false</organismsDiffer>
    <experiments>3</experiments>
</comment>
<comment type="interaction">
    <interactant intactId="EBI-715074">
        <id>Q13561</id>
    </interactant>
    <interactant intactId="EBI-466029">
        <id>P42858</id>
        <label>HTT</label>
    </interactant>
    <organismsDiffer>false</organismsDiffer>
    <experiments>12</experiments>
</comment>
<comment type="interaction">
    <interactant intactId="EBI-715074">
        <id>Q13561</id>
    </interactant>
    <interactant intactId="EBI-2125614">
        <id>Q9BVG8</id>
        <label>KIFC3</label>
    </interactant>
    <organismsDiffer>false</organismsDiffer>
    <experiments>3</experiments>
</comment>
<comment type="interaction">
    <interactant intactId="EBI-715074">
        <id>Q13561</id>
    </interactant>
    <interactant intactId="EBI-14069005">
        <id>Q9BVG8-5</id>
        <label>KIFC3</label>
    </interactant>
    <organismsDiffer>false</organismsDiffer>
    <experiments>3</experiments>
</comment>
<comment type="interaction">
    <interactant intactId="EBI-715074">
        <id>Q13561</id>
    </interactant>
    <interactant intactId="EBI-726739">
        <id>Q9UPY8</id>
        <label>MAPRE3</label>
    </interactant>
    <organismsDiffer>false</organismsDiffer>
    <experiments>3</experiments>
</comment>
<comment type="interaction">
    <interactant intactId="EBI-715074">
        <id>Q13561</id>
    </interactant>
    <interactant intactId="EBI-352915">
        <id>O75340</id>
        <label>PDCD6</label>
    </interactant>
    <organismsDiffer>false</organismsDiffer>
    <experiments>4</experiments>
</comment>
<comment type="interaction">
    <interactant intactId="EBI-715074">
        <id>Q13561</id>
    </interactant>
    <interactant intactId="EBI-14093916">
        <id>Q9UJ41-4</id>
        <label>RABGEF1</label>
    </interactant>
    <organismsDiffer>false</organismsDiffer>
    <experiments>3</experiments>
</comment>
<comment type="interaction">
    <interactant intactId="EBI-715074">
        <id>Q13561</id>
    </interactant>
    <interactant intactId="EBI-726876">
        <id>Q6NUQ1</id>
        <label>RINT1</label>
    </interactant>
    <organismsDiffer>false</organismsDiffer>
    <experiments>3</experiments>
</comment>
<comment type="interaction">
    <interactant intactId="EBI-715074">
        <id>Q13561</id>
    </interactant>
    <interactant intactId="EBI-358489">
        <id>Q96GM5</id>
        <label>SMARCD1</label>
    </interactant>
    <organismsDiffer>false</organismsDiffer>
    <experiments>3</experiments>
</comment>
<comment type="interaction">
    <interactant intactId="EBI-715074">
        <id>Q13561</id>
    </interactant>
    <interactant intactId="EBI-6116822">
        <id>Q8N3L3</id>
        <label>TXLNB</label>
    </interactant>
    <organismsDiffer>false</organismsDiffer>
    <experiments>3</experiments>
</comment>
<comment type="interaction">
    <interactant intactId="EBI-715074">
        <id>Q13561</id>
    </interactant>
    <interactant intactId="EBI-739895">
        <id>Q8N6Y0</id>
        <label>USHBP1</label>
    </interactant>
    <organismsDiffer>false</organismsDiffer>
    <experiments>3</experiments>
</comment>
<comment type="interaction">
    <interactant intactId="EBI-715074">
        <id>Q13561</id>
    </interactant>
    <interactant intactId="EBI-2527283">
        <id>Q96AX1</id>
        <label>VPS33A</label>
    </interactant>
    <organismsDiffer>false</organismsDiffer>
    <experiments>3</experiments>
</comment>
<comment type="interaction">
    <interactant intactId="EBI-715074">
        <id>Q13561</id>
    </interactant>
    <interactant intactId="EBI-25489038">
        <id>P59634</id>
        <label>6</label>
    </interactant>
    <organismsDiffer>true</organismsDiffer>
    <experiments>2</experiments>
</comment>
<comment type="interaction">
    <interactant intactId="EBI-715074">
        <id>Q13561</id>
    </interactant>
    <interactant intactId="EBI-25488942">
        <id>Q7TLC7</id>
        <label>ORF14</label>
    </interactant>
    <organismsDiffer>true</organismsDiffer>
    <experiments>2</experiments>
</comment>
<comment type="subcellular location">
    <subcellularLocation>
        <location evidence="7 10">Cytoplasm</location>
        <location evidence="7 10">Cytoskeleton</location>
        <location evidence="7 10">Microtubule organizing center</location>
        <location evidence="7 10">Centrosome</location>
    </subcellularLocation>
    <subcellularLocation>
        <location evidence="10">Membrane</location>
        <topology evidence="10">Peripheral membrane protein</topology>
    </subcellularLocation>
    <subcellularLocation>
        <location evidence="1">Cytoplasm</location>
        <location evidence="1">Cytoskeleton</location>
    </subcellularLocation>
</comment>
<comment type="alternative products">
    <event type="alternative splicing"/>
    <isoform>
        <id>Q13561-1</id>
        <name>1</name>
        <sequence type="displayed"/>
    </isoform>
    <isoform>
        <id>Q13561-2</id>
        <name>2</name>
        <sequence type="described" ref="VSP_040485"/>
    </isoform>
    <isoform>
        <id>Q13561-3</id>
        <name>3</name>
        <sequence type="described" ref="VSP_040486"/>
    </isoform>
</comment>
<comment type="similarity">
    <text evidence="15">Belongs to the dynactin subunit 2 family.</text>
</comment>
<comment type="sequence caution" evidence="15">
    <conflict type="frameshift">
        <sequence resource="EMBL-CDS" id="AAO34395"/>
    </conflict>
</comment>
<accession>Q13561</accession>
<accession>B2RBK5</accession>
<accession>Q86YN2</accession>
<accession>Q9BW17</accession>
<dbReference type="EMBL" id="U50733">
    <property type="protein sequence ID" value="AAC50423.1"/>
    <property type="molecule type" value="mRNA"/>
</dbReference>
<dbReference type="EMBL" id="AK314705">
    <property type="protein sequence ID" value="BAG37252.1"/>
    <property type="molecule type" value="mRNA"/>
</dbReference>
<dbReference type="EMBL" id="AC022366">
    <property type="status" value="NOT_ANNOTATED_CDS"/>
    <property type="molecule type" value="Genomic_DNA"/>
</dbReference>
<dbReference type="EMBL" id="AC022506">
    <property type="status" value="NOT_ANNOTATED_CDS"/>
    <property type="molecule type" value="Genomic_DNA"/>
</dbReference>
<dbReference type="EMBL" id="BC000718">
    <property type="protein sequence ID" value="AAH00718.1"/>
    <property type="molecule type" value="mRNA"/>
</dbReference>
<dbReference type="EMBL" id="BC009468">
    <property type="protein sequence ID" value="AAH09468.1"/>
    <property type="molecule type" value="mRNA"/>
</dbReference>
<dbReference type="EMBL" id="BC014083">
    <property type="protein sequence ID" value="AAH14083.1"/>
    <property type="molecule type" value="mRNA"/>
</dbReference>
<dbReference type="EMBL" id="AY189155">
    <property type="protein sequence ID" value="AAO34395.1"/>
    <property type="status" value="ALT_FRAME"/>
    <property type="molecule type" value="mRNA"/>
</dbReference>
<dbReference type="CCDS" id="CCDS44930.1">
    <molecule id="Q13561-2"/>
</dbReference>
<dbReference type="CCDS" id="CCDS58245.1">
    <molecule id="Q13561-1"/>
</dbReference>
<dbReference type="CCDS" id="CCDS73489.1">
    <molecule id="Q13561-3"/>
</dbReference>
<dbReference type="RefSeq" id="NP_001248341.1">
    <molecule id="Q13561-3"/>
    <property type="nucleotide sequence ID" value="NM_001261412.2"/>
</dbReference>
<dbReference type="RefSeq" id="NP_001248342.1">
    <molecule id="Q13561-1"/>
    <property type="nucleotide sequence ID" value="NM_001261413.2"/>
</dbReference>
<dbReference type="RefSeq" id="NP_006391.1">
    <molecule id="Q13561-2"/>
    <property type="nucleotide sequence ID" value="NM_006400.5"/>
</dbReference>
<dbReference type="SMR" id="Q13561"/>
<dbReference type="BioGRID" id="115794">
    <property type="interactions" value="370"/>
</dbReference>
<dbReference type="DIP" id="DIP-37545N"/>
<dbReference type="FunCoup" id="Q13561">
    <property type="interactions" value="1708"/>
</dbReference>
<dbReference type="IntAct" id="Q13561">
    <property type="interactions" value="153"/>
</dbReference>
<dbReference type="MINT" id="Q13561"/>
<dbReference type="STRING" id="9606.ENSP00000408910"/>
<dbReference type="GlyGen" id="Q13561">
    <property type="glycosylation" value="1 site, 1 O-linked glycan (1 site)"/>
</dbReference>
<dbReference type="iPTMnet" id="Q13561"/>
<dbReference type="MetOSite" id="Q13561"/>
<dbReference type="PhosphoSitePlus" id="Q13561"/>
<dbReference type="BioMuta" id="DCTN2"/>
<dbReference type="DMDM" id="22096346"/>
<dbReference type="REPRODUCTION-2DPAGE" id="IPI00220503"/>
<dbReference type="jPOST" id="Q13561"/>
<dbReference type="MassIVE" id="Q13561"/>
<dbReference type="PaxDb" id="9606-ENSP00000408910"/>
<dbReference type="PeptideAtlas" id="Q13561"/>
<dbReference type="ProteomicsDB" id="59558">
    <molecule id="Q13561-1"/>
</dbReference>
<dbReference type="ProteomicsDB" id="59559">
    <molecule id="Q13561-2"/>
</dbReference>
<dbReference type="ProteomicsDB" id="59560">
    <molecule id="Q13561-3"/>
</dbReference>
<dbReference type="Pumba" id="Q13561"/>
<dbReference type="Antibodypedia" id="28711">
    <property type="antibodies" value="377 antibodies from 35 providers"/>
</dbReference>
<dbReference type="DNASU" id="10540"/>
<dbReference type="Ensembl" id="ENST00000434715.7">
    <molecule id="Q13561-2"/>
    <property type="protein sequence ID" value="ENSP00000408910.3"/>
    <property type="gene ID" value="ENSG00000175203.17"/>
</dbReference>
<dbReference type="Ensembl" id="ENST00000543672.6">
    <molecule id="Q13561-3"/>
    <property type="protein sequence ID" value="ENSP00000439376.2"/>
    <property type="gene ID" value="ENSG00000175203.17"/>
</dbReference>
<dbReference type="Ensembl" id="ENST00000548249.6">
    <molecule id="Q13561-1"/>
    <property type="protein sequence ID" value="ENSP00000447824.1"/>
    <property type="gene ID" value="ENSG00000175203.17"/>
</dbReference>
<dbReference type="GeneID" id="10540"/>
<dbReference type="KEGG" id="hsa:10540"/>
<dbReference type="MANE-Select" id="ENST00000548249.6">
    <property type="protein sequence ID" value="ENSP00000447824.1"/>
    <property type="RefSeq nucleotide sequence ID" value="NM_001261413.2"/>
    <property type="RefSeq protein sequence ID" value="NP_001248342.1"/>
</dbReference>
<dbReference type="UCSC" id="uc001som.3">
    <molecule id="Q13561-1"/>
    <property type="organism name" value="human"/>
</dbReference>
<dbReference type="AGR" id="HGNC:2712"/>
<dbReference type="CTD" id="10540"/>
<dbReference type="DisGeNET" id="10540"/>
<dbReference type="GeneCards" id="DCTN2"/>
<dbReference type="GeneReviews" id="DCTN2"/>
<dbReference type="HGNC" id="HGNC:2712">
    <property type="gene designation" value="DCTN2"/>
</dbReference>
<dbReference type="HPA" id="ENSG00000175203">
    <property type="expression patterns" value="Low tissue specificity"/>
</dbReference>
<dbReference type="MIM" id="607376">
    <property type="type" value="gene"/>
</dbReference>
<dbReference type="neXtProt" id="NX_Q13561"/>
<dbReference type="OpenTargets" id="ENSG00000175203"/>
<dbReference type="PharmGKB" id="PA27181"/>
<dbReference type="VEuPathDB" id="HostDB:ENSG00000175203"/>
<dbReference type="eggNOG" id="KOG3958">
    <property type="taxonomic scope" value="Eukaryota"/>
</dbReference>
<dbReference type="GeneTree" id="ENSGT00390000003427"/>
<dbReference type="InParanoid" id="Q13561"/>
<dbReference type="OMA" id="YKFGDWE"/>
<dbReference type="OrthoDB" id="4977at2759"/>
<dbReference type="PAN-GO" id="Q13561">
    <property type="GO annotations" value="4 GO annotations based on evolutionary models"/>
</dbReference>
<dbReference type="PhylomeDB" id="Q13561"/>
<dbReference type="TreeFam" id="TF105247"/>
<dbReference type="PathwayCommons" id="Q13561"/>
<dbReference type="Reactome" id="R-HSA-2132295">
    <property type="pathway name" value="MHC class II antigen presentation"/>
</dbReference>
<dbReference type="Reactome" id="R-HSA-2565942">
    <property type="pathway name" value="Regulation of PLK1 Activity at G2/M Transition"/>
</dbReference>
<dbReference type="Reactome" id="R-HSA-3371497">
    <property type="pathway name" value="HSP90 chaperone cycle for steroid hormone receptors (SHR) in the presence of ligand"/>
</dbReference>
<dbReference type="Reactome" id="R-HSA-380259">
    <property type="pathway name" value="Loss of Nlp from mitotic centrosomes"/>
</dbReference>
<dbReference type="Reactome" id="R-HSA-380270">
    <property type="pathway name" value="Recruitment of mitotic centrosome proteins and complexes"/>
</dbReference>
<dbReference type="Reactome" id="R-HSA-380284">
    <property type="pathway name" value="Loss of proteins required for interphase microtubule organization from the centrosome"/>
</dbReference>
<dbReference type="Reactome" id="R-HSA-380320">
    <property type="pathway name" value="Recruitment of NuMA to mitotic centrosomes"/>
</dbReference>
<dbReference type="Reactome" id="R-HSA-5620912">
    <property type="pathway name" value="Anchoring of the basal body to the plasma membrane"/>
</dbReference>
<dbReference type="Reactome" id="R-HSA-6807878">
    <property type="pathway name" value="COPI-mediated anterograde transport"/>
</dbReference>
<dbReference type="Reactome" id="R-HSA-6811436">
    <property type="pathway name" value="COPI-independent Golgi-to-ER retrograde traffic"/>
</dbReference>
<dbReference type="Reactome" id="R-HSA-8854518">
    <property type="pathway name" value="AURKA Activation by TPX2"/>
</dbReference>
<dbReference type="SignaLink" id="Q13561"/>
<dbReference type="SIGNOR" id="Q13561"/>
<dbReference type="BioGRID-ORCS" id="10540">
    <property type="hits" value="692 hits in 1169 CRISPR screens"/>
</dbReference>
<dbReference type="CD-CODE" id="8C2F96ED">
    <property type="entry name" value="Centrosome"/>
</dbReference>
<dbReference type="CD-CODE" id="FB4E32DD">
    <property type="entry name" value="Presynaptic clusters and postsynaptic densities"/>
</dbReference>
<dbReference type="ChiTaRS" id="DCTN2">
    <property type="organism name" value="human"/>
</dbReference>
<dbReference type="GeneWiki" id="DCTN2"/>
<dbReference type="GenomeRNAi" id="10540"/>
<dbReference type="Pharos" id="Q13561">
    <property type="development level" value="Tbio"/>
</dbReference>
<dbReference type="PRO" id="PR:Q13561"/>
<dbReference type="Proteomes" id="UP000005640">
    <property type="component" value="Chromosome 12"/>
</dbReference>
<dbReference type="RNAct" id="Q13561">
    <property type="molecule type" value="protein"/>
</dbReference>
<dbReference type="Bgee" id="ENSG00000175203">
    <property type="expression patterns" value="Expressed in cortical plate and 213 other cell types or tissues"/>
</dbReference>
<dbReference type="ExpressionAtlas" id="Q13561">
    <property type="expression patterns" value="baseline and differential"/>
</dbReference>
<dbReference type="GO" id="GO:0005813">
    <property type="term" value="C:centrosome"/>
    <property type="evidence" value="ECO:0000314"/>
    <property type="project" value="UniProtKB"/>
</dbReference>
<dbReference type="GO" id="GO:0005737">
    <property type="term" value="C:cytoplasm"/>
    <property type="evidence" value="ECO:0000318"/>
    <property type="project" value="GO_Central"/>
</dbReference>
<dbReference type="GO" id="GO:0005829">
    <property type="term" value="C:cytosol"/>
    <property type="evidence" value="ECO:0000304"/>
    <property type="project" value="Reactome"/>
</dbReference>
<dbReference type="GO" id="GO:0005869">
    <property type="term" value="C:dynactin complex"/>
    <property type="evidence" value="ECO:0000314"/>
    <property type="project" value="UniProtKB"/>
</dbReference>
<dbReference type="GO" id="GO:0030286">
    <property type="term" value="C:dynein complex"/>
    <property type="evidence" value="ECO:0007669"/>
    <property type="project" value="UniProtKB-KW"/>
</dbReference>
<dbReference type="GO" id="GO:0070062">
    <property type="term" value="C:extracellular exosome"/>
    <property type="evidence" value="ECO:0007005"/>
    <property type="project" value="UniProtKB"/>
</dbReference>
<dbReference type="GO" id="GO:0030426">
    <property type="term" value="C:growth cone"/>
    <property type="evidence" value="ECO:0007669"/>
    <property type="project" value="Ensembl"/>
</dbReference>
<dbReference type="GO" id="GO:0000776">
    <property type="term" value="C:kinetochore"/>
    <property type="evidence" value="ECO:0000314"/>
    <property type="project" value="UniProtKB"/>
</dbReference>
<dbReference type="GO" id="GO:0016020">
    <property type="term" value="C:membrane"/>
    <property type="evidence" value="ECO:0007669"/>
    <property type="project" value="UniProtKB-SubCell"/>
</dbReference>
<dbReference type="GO" id="GO:0005874">
    <property type="term" value="C:microtubule"/>
    <property type="evidence" value="ECO:0007669"/>
    <property type="project" value="UniProtKB-KW"/>
</dbReference>
<dbReference type="GO" id="GO:0031982">
    <property type="term" value="C:vesicle"/>
    <property type="evidence" value="ECO:0000314"/>
    <property type="project" value="UniProtKB"/>
</dbReference>
<dbReference type="GO" id="GO:0042802">
    <property type="term" value="F:identical protein binding"/>
    <property type="evidence" value="ECO:0000353"/>
    <property type="project" value="IntAct"/>
</dbReference>
<dbReference type="GO" id="GO:0019901">
    <property type="term" value="F:protein kinase binding"/>
    <property type="evidence" value="ECO:0000353"/>
    <property type="project" value="ARUK-UCL"/>
</dbReference>
<dbReference type="GO" id="GO:0030507">
    <property type="term" value="F:spectrin binding"/>
    <property type="evidence" value="ECO:0000314"/>
    <property type="project" value="MGI"/>
</dbReference>
<dbReference type="GO" id="GO:0032402">
    <property type="term" value="P:melanosome transport"/>
    <property type="evidence" value="ECO:0007669"/>
    <property type="project" value="Ensembl"/>
</dbReference>
<dbReference type="GO" id="GO:0007080">
    <property type="term" value="P:mitotic metaphase chromosome alignment"/>
    <property type="evidence" value="ECO:0000315"/>
    <property type="project" value="UniProtKB"/>
</dbReference>
<dbReference type="GO" id="GO:0007052">
    <property type="term" value="P:mitotic spindle organization"/>
    <property type="evidence" value="ECO:0000315"/>
    <property type="project" value="UniProtKB"/>
</dbReference>
<dbReference type="GO" id="GO:0071539">
    <property type="term" value="P:protein localization to centrosome"/>
    <property type="evidence" value="ECO:0000315"/>
    <property type="project" value="SYSCILIA_CCNET"/>
</dbReference>
<dbReference type="InterPro" id="IPR028133">
    <property type="entry name" value="Dynamitin"/>
</dbReference>
<dbReference type="PANTHER" id="PTHR15346">
    <property type="entry name" value="DYNACTIN SUBUNIT"/>
    <property type="match status" value="1"/>
</dbReference>
<dbReference type="Pfam" id="PF04912">
    <property type="entry name" value="Dynamitin"/>
    <property type="match status" value="1"/>
</dbReference>
<name>DCTN2_HUMAN</name>
<sequence>MADPKYADLPGIARNEPDVYETSDLPEDDQAEFDAEELTSTSVEHIIVNPNAAYDKFKDKRVGTKGLDFSDRIGKTKRTGYESGEYEMLGEGLGVKETPQQKYQRLLHEVQELTTEVEKIKTTVKESATEEKLTPVLLAKQLAALKQQLVASHLEKLLGPDAAINLTDPDGALAKRLLLQLEATKNSKGGSGGKTTGTPPDSSLVTYELHSRPEQDKFSQAAKVAELEKRLTELETAVRCDQDAQNPLSAGLQGACLMETVELLQAKVSALDLAVLDQVEARLQSVLGKVNEIAKHKASVEDADTQSKVHQLYETIQRWSPIASTLPELVQRLVTIKQLHEQAMQFGQLLTHLDTTQQMIANSLKDNTTLLTQVQTTMRENLATVEGNFASIDERMKKLGK</sequence>
<gene>
    <name evidence="16" type="primary">DCTN2</name>
    <name type="synonym">DCTN50</name>
</gene>
<organism>
    <name type="scientific">Homo sapiens</name>
    <name type="common">Human</name>
    <dbReference type="NCBI Taxonomy" id="9606"/>
    <lineage>
        <taxon>Eukaryota</taxon>
        <taxon>Metazoa</taxon>
        <taxon>Chordata</taxon>
        <taxon>Craniata</taxon>
        <taxon>Vertebrata</taxon>
        <taxon>Euteleostomi</taxon>
        <taxon>Mammalia</taxon>
        <taxon>Eutheria</taxon>
        <taxon>Euarchontoglires</taxon>
        <taxon>Primates</taxon>
        <taxon>Haplorrhini</taxon>
        <taxon>Catarrhini</taxon>
        <taxon>Hominidae</taxon>
        <taxon>Homo</taxon>
    </lineage>
</organism>
<proteinExistence type="evidence at protein level"/>
<protein>
    <recommendedName>
        <fullName>Dynactin subunit 2</fullName>
    </recommendedName>
    <alternativeName>
        <fullName>50 kDa dynein-associated polypeptide</fullName>
    </alternativeName>
    <alternativeName>
        <fullName>Dynactin complex 50 kDa subunit</fullName>
        <shortName>DCTN-50</shortName>
    </alternativeName>
    <alternativeName>
        <fullName>p50 dynamitin</fullName>
    </alternativeName>
</protein>
<evidence type="ECO:0000250" key="1">
    <source>
        <dbReference type="UniProtKB" id="A0A5G2QD80"/>
    </source>
</evidence>
<evidence type="ECO:0000250" key="2">
    <source>
        <dbReference type="UniProtKB" id="Q99KJ8"/>
    </source>
</evidence>
<evidence type="ECO:0000255" key="3"/>
<evidence type="ECO:0000256" key="4">
    <source>
        <dbReference type="SAM" id="MobiDB-lite"/>
    </source>
</evidence>
<evidence type="ECO:0000269" key="5">
    <source>
    </source>
</evidence>
<evidence type="ECO:0000269" key="6">
    <source>
    </source>
</evidence>
<evidence type="ECO:0000269" key="7">
    <source>
    </source>
</evidence>
<evidence type="ECO:0000269" key="8">
    <source>
    </source>
</evidence>
<evidence type="ECO:0000269" key="9">
    <source>
    </source>
</evidence>
<evidence type="ECO:0000269" key="10">
    <source>
    </source>
</evidence>
<evidence type="ECO:0000269" key="11">
    <source ref="7"/>
</evidence>
<evidence type="ECO:0000303" key="12">
    <source>
    </source>
</evidence>
<evidence type="ECO:0000303" key="13">
    <source>
    </source>
</evidence>
<evidence type="ECO:0000303" key="14">
    <source ref="5"/>
</evidence>
<evidence type="ECO:0000305" key="15"/>
<evidence type="ECO:0000312" key="16">
    <source>
        <dbReference type="HGNC" id="HGNC:2712"/>
    </source>
</evidence>
<evidence type="ECO:0007744" key="17">
    <source>
    </source>
</evidence>
<evidence type="ECO:0007744" key="18">
    <source>
    </source>
</evidence>
<evidence type="ECO:0007744" key="19">
    <source>
    </source>
</evidence>
<evidence type="ECO:0007744" key="20">
    <source>
    </source>
</evidence>
<reference key="1">
    <citation type="journal article" date="1996" name="J. Cell Biol.">
        <title>Molecular characterization of the 50-kD subunit of dynactin reveals function for the complex in chromosome alignment and spindle organization during mitosis.</title>
        <authorList>
            <person name="Echeverri C.J."/>
            <person name="Paschal B.M."/>
            <person name="Vaughan K.T."/>
            <person name="Vallee R.B."/>
        </authorList>
    </citation>
    <scope>NUCLEOTIDE SEQUENCE [MRNA] (ISOFORM 2)</scope>
    <scope>PARTIAL PROTEIN SEQUENCE</scope>
    <scope>SUBCELLULAR LOCATION</scope>
</reference>
<reference key="2">
    <citation type="journal article" date="2004" name="Nat. Genet.">
        <title>Complete sequencing and characterization of 21,243 full-length human cDNAs.</title>
        <authorList>
            <person name="Ota T."/>
            <person name="Suzuki Y."/>
            <person name="Nishikawa T."/>
            <person name="Otsuki T."/>
            <person name="Sugiyama T."/>
            <person name="Irie R."/>
            <person name="Wakamatsu A."/>
            <person name="Hayashi K."/>
            <person name="Sato H."/>
            <person name="Nagai K."/>
            <person name="Kimura K."/>
            <person name="Makita H."/>
            <person name="Sekine M."/>
            <person name="Obayashi M."/>
            <person name="Nishi T."/>
            <person name="Shibahara T."/>
            <person name="Tanaka T."/>
            <person name="Ishii S."/>
            <person name="Yamamoto J."/>
            <person name="Saito K."/>
            <person name="Kawai Y."/>
            <person name="Isono Y."/>
            <person name="Nakamura Y."/>
            <person name="Nagahari K."/>
            <person name="Murakami K."/>
            <person name="Yasuda T."/>
            <person name="Iwayanagi T."/>
            <person name="Wagatsuma M."/>
            <person name="Shiratori A."/>
            <person name="Sudo H."/>
            <person name="Hosoiri T."/>
            <person name="Kaku Y."/>
            <person name="Kodaira H."/>
            <person name="Kondo H."/>
            <person name="Sugawara M."/>
            <person name="Takahashi M."/>
            <person name="Kanda K."/>
            <person name="Yokoi T."/>
            <person name="Furuya T."/>
            <person name="Kikkawa E."/>
            <person name="Omura Y."/>
            <person name="Abe K."/>
            <person name="Kamihara K."/>
            <person name="Katsuta N."/>
            <person name="Sato K."/>
            <person name="Tanikawa M."/>
            <person name="Yamazaki M."/>
            <person name="Ninomiya K."/>
            <person name="Ishibashi T."/>
            <person name="Yamashita H."/>
            <person name="Murakawa K."/>
            <person name="Fujimori K."/>
            <person name="Tanai H."/>
            <person name="Kimata M."/>
            <person name="Watanabe M."/>
            <person name="Hiraoka S."/>
            <person name="Chiba Y."/>
            <person name="Ishida S."/>
            <person name="Ono Y."/>
            <person name="Takiguchi S."/>
            <person name="Watanabe S."/>
            <person name="Yosida M."/>
            <person name="Hotuta T."/>
            <person name="Kusano J."/>
            <person name="Kanehori K."/>
            <person name="Takahashi-Fujii A."/>
            <person name="Hara H."/>
            <person name="Tanase T.-O."/>
            <person name="Nomura Y."/>
            <person name="Togiya S."/>
            <person name="Komai F."/>
            <person name="Hara R."/>
            <person name="Takeuchi K."/>
            <person name="Arita M."/>
            <person name="Imose N."/>
            <person name="Musashino K."/>
            <person name="Yuuki H."/>
            <person name="Oshima A."/>
            <person name="Sasaki N."/>
            <person name="Aotsuka S."/>
            <person name="Yoshikawa Y."/>
            <person name="Matsunawa H."/>
            <person name="Ichihara T."/>
            <person name="Shiohata N."/>
            <person name="Sano S."/>
            <person name="Moriya S."/>
            <person name="Momiyama H."/>
            <person name="Satoh N."/>
            <person name="Takami S."/>
            <person name="Terashima Y."/>
            <person name="Suzuki O."/>
            <person name="Nakagawa S."/>
            <person name="Senoh A."/>
            <person name="Mizoguchi H."/>
            <person name="Goto Y."/>
            <person name="Shimizu F."/>
            <person name="Wakebe H."/>
            <person name="Hishigaki H."/>
            <person name="Watanabe T."/>
            <person name="Sugiyama A."/>
            <person name="Takemoto M."/>
            <person name="Kawakami B."/>
            <person name="Yamazaki M."/>
            <person name="Watanabe K."/>
            <person name="Kumagai A."/>
            <person name="Itakura S."/>
            <person name="Fukuzumi Y."/>
            <person name="Fujimori Y."/>
            <person name="Komiyama M."/>
            <person name="Tashiro H."/>
            <person name="Tanigami A."/>
            <person name="Fujiwara T."/>
            <person name="Ono T."/>
            <person name="Yamada K."/>
            <person name="Fujii Y."/>
            <person name="Ozaki K."/>
            <person name="Hirao M."/>
            <person name="Ohmori Y."/>
            <person name="Kawabata A."/>
            <person name="Hikiji T."/>
            <person name="Kobatake N."/>
            <person name="Inagaki H."/>
            <person name="Ikema Y."/>
            <person name="Okamoto S."/>
            <person name="Okitani R."/>
            <person name="Kawakami T."/>
            <person name="Noguchi S."/>
            <person name="Itoh T."/>
            <person name="Shigeta K."/>
            <person name="Senba T."/>
            <person name="Matsumura K."/>
            <person name="Nakajima Y."/>
            <person name="Mizuno T."/>
            <person name="Morinaga M."/>
            <person name="Sasaki M."/>
            <person name="Togashi T."/>
            <person name="Oyama M."/>
            <person name="Hata H."/>
            <person name="Watanabe M."/>
            <person name="Komatsu T."/>
            <person name="Mizushima-Sugano J."/>
            <person name="Satoh T."/>
            <person name="Shirai Y."/>
            <person name="Takahashi Y."/>
            <person name="Nakagawa K."/>
            <person name="Okumura K."/>
            <person name="Nagase T."/>
            <person name="Nomura N."/>
            <person name="Kikuchi H."/>
            <person name="Masuho Y."/>
            <person name="Yamashita R."/>
            <person name="Nakai K."/>
            <person name="Yada T."/>
            <person name="Nakamura Y."/>
            <person name="Ohara O."/>
            <person name="Isogai T."/>
            <person name="Sugano S."/>
        </authorList>
    </citation>
    <scope>NUCLEOTIDE SEQUENCE [LARGE SCALE MRNA] (ISOFORM 2)</scope>
</reference>
<reference key="3">
    <citation type="journal article" date="2006" name="Nature">
        <title>The finished DNA sequence of human chromosome 12.</title>
        <authorList>
            <person name="Scherer S.E."/>
            <person name="Muzny D.M."/>
            <person name="Buhay C.J."/>
            <person name="Chen R."/>
            <person name="Cree A."/>
            <person name="Ding Y."/>
            <person name="Dugan-Rocha S."/>
            <person name="Gill R."/>
            <person name="Gunaratne P."/>
            <person name="Harris R.A."/>
            <person name="Hawes A.C."/>
            <person name="Hernandez J."/>
            <person name="Hodgson A.V."/>
            <person name="Hume J."/>
            <person name="Jackson A."/>
            <person name="Khan Z.M."/>
            <person name="Kovar-Smith C."/>
            <person name="Lewis L.R."/>
            <person name="Lozado R.J."/>
            <person name="Metzker M.L."/>
            <person name="Milosavljevic A."/>
            <person name="Miner G.R."/>
            <person name="Montgomery K.T."/>
            <person name="Morgan M.B."/>
            <person name="Nazareth L.V."/>
            <person name="Scott G."/>
            <person name="Sodergren E."/>
            <person name="Song X.-Z."/>
            <person name="Steffen D."/>
            <person name="Lovering R.C."/>
            <person name="Wheeler D.A."/>
            <person name="Worley K.C."/>
            <person name="Yuan Y."/>
            <person name="Zhang Z."/>
            <person name="Adams C.Q."/>
            <person name="Ansari-Lari M.A."/>
            <person name="Ayele M."/>
            <person name="Brown M.J."/>
            <person name="Chen G."/>
            <person name="Chen Z."/>
            <person name="Clerc-Blankenburg K.P."/>
            <person name="Davis C."/>
            <person name="Delgado O."/>
            <person name="Dinh H.H."/>
            <person name="Draper H."/>
            <person name="Gonzalez-Garay M.L."/>
            <person name="Havlak P."/>
            <person name="Jackson L.R."/>
            <person name="Jacob L.S."/>
            <person name="Kelly S.H."/>
            <person name="Li L."/>
            <person name="Li Z."/>
            <person name="Liu J."/>
            <person name="Liu W."/>
            <person name="Lu J."/>
            <person name="Maheshwari M."/>
            <person name="Nguyen B.-V."/>
            <person name="Okwuonu G.O."/>
            <person name="Pasternak S."/>
            <person name="Perez L.M."/>
            <person name="Plopper F.J.H."/>
            <person name="Santibanez J."/>
            <person name="Shen H."/>
            <person name="Tabor P.E."/>
            <person name="Verduzco D."/>
            <person name="Waldron L."/>
            <person name="Wang Q."/>
            <person name="Williams G.A."/>
            <person name="Zhang J."/>
            <person name="Zhou J."/>
            <person name="Allen C.C."/>
            <person name="Amin A.G."/>
            <person name="Anyalebechi V."/>
            <person name="Bailey M."/>
            <person name="Barbaria J.A."/>
            <person name="Bimage K.E."/>
            <person name="Bryant N.P."/>
            <person name="Burch P.E."/>
            <person name="Burkett C.E."/>
            <person name="Burrell K.L."/>
            <person name="Calderon E."/>
            <person name="Cardenas V."/>
            <person name="Carter K."/>
            <person name="Casias K."/>
            <person name="Cavazos I."/>
            <person name="Cavazos S.R."/>
            <person name="Ceasar H."/>
            <person name="Chacko J."/>
            <person name="Chan S.N."/>
            <person name="Chavez D."/>
            <person name="Christopoulos C."/>
            <person name="Chu J."/>
            <person name="Cockrell R."/>
            <person name="Cox C.D."/>
            <person name="Dang M."/>
            <person name="Dathorne S.R."/>
            <person name="David R."/>
            <person name="Davis C.M."/>
            <person name="Davy-Carroll L."/>
            <person name="Deshazo D.R."/>
            <person name="Donlin J.E."/>
            <person name="D'Souza L."/>
            <person name="Eaves K.A."/>
            <person name="Egan A."/>
            <person name="Emery-Cohen A.J."/>
            <person name="Escotto M."/>
            <person name="Flagg N."/>
            <person name="Forbes L.D."/>
            <person name="Gabisi A.M."/>
            <person name="Garza M."/>
            <person name="Hamilton C."/>
            <person name="Henderson N."/>
            <person name="Hernandez O."/>
            <person name="Hines S."/>
            <person name="Hogues M.E."/>
            <person name="Huang M."/>
            <person name="Idlebird D.G."/>
            <person name="Johnson R."/>
            <person name="Jolivet A."/>
            <person name="Jones S."/>
            <person name="Kagan R."/>
            <person name="King L.M."/>
            <person name="Leal B."/>
            <person name="Lebow H."/>
            <person name="Lee S."/>
            <person name="LeVan J.M."/>
            <person name="Lewis L.C."/>
            <person name="London P."/>
            <person name="Lorensuhewa L.M."/>
            <person name="Loulseged H."/>
            <person name="Lovett D.A."/>
            <person name="Lucier A."/>
            <person name="Lucier R.L."/>
            <person name="Ma J."/>
            <person name="Madu R.C."/>
            <person name="Mapua P."/>
            <person name="Martindale A.D."/>
            <person name="Martinez E."/>
            <person name="Massey E."/>
            <person name="Mawhiney S."/>
            <person name="Meador M.G."/>
            <person name="Mendez S."/>
            <person name="Mercado C."/>
            <person name="Mercado I.C."/>
            <person name="Merritt C.E."/>
            <person name="Miner Z.L."/>
            <person name="Minja E."/>
            <person name="Mitchell T."/>
            <person name="Mohabbat F."/>
            <person name="Mohabbat K."/>
            <person name="Montgomery B."/>
            <person name="Moore N."/>
            <person name="Morris S."/>
            <person name="Munidasa M."/>
            <person name="Ngo R.N."/>
            <person name="Nguyen N.B."/>
            <person name="Nickerson E."/>
            <person name="Nwaokelemeh O.O."/>
            <person name="Nwokenkwo S."/>
            <person name="Obregon M."/>
            <person name="Oguh M."/>
            <person name="Oragunye N."/>
            <person name="Oviedo R.J."/>
            <person name="Parish B.J."/>
            <person name="Parker D.N."/>
            <person name="Parrish J."/>
            <person name="Parks K.L."/>
            <person name="Paul H.A."/>
            <person name="Payton B.A."/>
            <person name="Perez A."/>
            <person name="Perrin W."/>
            <person name="Pickens A."/>
            <person name="Primus E.L."/>
            <person name="Pu L.-L."/>
            <person name="Puazo M."/>
            <person name="Quiles M.M."/>
            <person name="Quiroz J.B."/>
            <person name="Rabata D."/>
            <person name="Reeves K."/>
            <person name="Ruiz S.J."/>
            <person name="Shao H."/>
            <person name="Sisson I."/>
            <person name="Sonaike T."/>
            <person name="Sorelle R.P."/>
            <person name="Sutton A.E."/>
            <person name="Svatek A.F."/>
            <person name="Svetz L.A."/>
            <person name="Tamerisa K.S."/>
            <person name="Taylor T.R."/>
            <person name="Teague B."/>
            <person name="Thomas N."/>
            <person name="Thorn R.D."/>
            <person name="Trejos Z.Y."/>
            <person name="Trevino B.K."/>
            <person name="Ukegbu O.N."/>
            <person name="Urban J.B."/>
            <person name="Vasquez L.I."/>
            <person name="Vera V.A."/>
            <person name="Villasana D.M."/>
            <person name="Wang L."/>
            <person name="Ward-Moore S."/>
            <person name="Warren J.T."/>
            <person name="Wei X."/>
            <person name="White F."/>
            <person name="Williamson A.L."/>
            <person name="Wleczyk R."/>
            <person name="Wooden H.S."/>
            <person name="Wooden S.H."/>
            <person name="Yen J."/>
            <person name="Yoon L."/>
            <person name="Yoon V."/>
            <person name="Zorrilla S.E."/>
            <person name="Nelson D."/>
            <person name="Kucherlapati R."/>
            <person name="Weinstock G."/>
            <person name="Gibbs R.A."/>
        </authorList>
    </citation>
    <scope>NUCLEOTIDE SEQUENCE [LARGE SCALE GENOMIC DNA]</scope>
</reference>
<reference key="4">
    <citation type="journal article" date="2004" name="Genome Res.">
        <title>The status, quality, and expansion of the NIH full-length cDNA project: the Mammalian Gene Collection (MGC).</title>
        <authorList>
            <consortium name="The MGC Project Team"/>
        </authorList>
    </citation>
    <scope>NUCLEOTIDE SEQUENCE [LARGE SCALE MRNA] (ISOFORM 1)</scope>
    <source>
        <tissue>Placenta</tissue>
        <tissue>Skin</tissue>
        <tissue>Uterus</tissue>
    </source>
</reference>
<reference key="5">
    <citation type="submission" date="2002-11" db="EMBL/GenBank/DDBJ databases">
        <title>Human 50 kD dynactin subunit, p50 dynamitin, isolated from HeLa cells.</title>
        <authorList>
            <person name="Aumais J.P."/>
            <person name="Yu-Lee L.-Y."/>
        </authorList>
    </citation>
    <scope>NUCLEOTIDE SEQUENCE [MRNA] OF 1-385 (ISOFORM 3)</scope>
</reference>
<reference key="6">
    <citation type="journal article" date="2003" name="Nat. Biotechnol.">
        <title>Exploring proteomes and analyzing protein processing by mass spectrometric identification of sorted N-terminal peptides.</title>
        <authorList>
            <person name="Gevaert K."/>
            <person name="Goethals M."/>
            <person name="Martens L."/>
            <person name="Van Damme J."/>
            <person name="Staes A."/>
            <person name="Thomas G.R."/>
            <person name="Vandekerckhove J."/>
        </authorList>
    </citation>
    <scope>PROTEIN SEQUENCE OF 2-14</scope>
    <source>
        <tissue>Platelet</tissue>
    </source>
</reference>
<reference key="7">
    <citation type="submission" date="2009-02" db="UniProtKB">
        <authorList>
            <person name="Bienvenut W.V."/>
            <person name="Ramsay A."/>
            <person name="Leung H.Y."/>
        </authorList>
    </citation>
    <scope>PROTEIN SEQUENCE OF 2-14</scope>
    <scope>CLEAVAGE OF INITIATOR METHIONINE</scope>
    <scope>ACETYLATION AT ALA-2</scope>
    <scope>IDENTIFICATION BY MASS SPECTROMETRY</scope>
    <source>
        <tissue>Embryonic kidney</tissue>
    </source>
</reference>
<reference key="8">
    <citation type="submission" date="2008-12" db="UniProtKB">
        <authorList>
            <person name="Lubec G."/>
            <person name="Chen W.-Q."/>
            <person name="Sun Y."/>
        </authorList>
    </citation>
    <scope>PROTEIN SEQUENCE OF 6-14; 79-96; 106-119; 157-185; 231-282 AND 366-395</scope>
    <scope>IDENTIFICATION BY MASS SPECTROMETRY</scope>
    <source>
        <tissue>Fetal brain cortex</tissue>
    </source>
</reference>
<reference key="9">
    <citation type="journal article" date="1999" name="Curr. Biol.">
        <title>The APC-associated protein EB1 associates with components of the dynactin complex and cytoplasmic dynein intermediate chain.</title>
        <authorList>
            <person name="Berrueta L."/>
            <person name="Tirnauer J.S."/>
            <person name="Schuyler S.C."/>
            <person name="Pellman D."/>
            <person name="Bierer B.E."/>
        </authorList>
    </citation>
    <scope>INTERACTION WITH MAPRE1</scope>
</reference>
<reference key="10">
    <citation type="journal article" date="2003" name="Nature">
        <title>Proteomic characterization of the human centrosome by protein correlation profiling.</title>
        <authorList>
            <person name="Andersen J.S."/>
            <person name="Wilkinson C.J."/>
            <person name="Mayor T."/>
            <person name="Mortensen P."/>
            <person name="Nigg E.A."/>
            <person name="Mann M."/>
        </authorList>
    </citation>
    <scope>IDENTIFICATION BY MASS SPECTROMETRY</scope>
    <scope>SUBCELLULAR LOCATION [LARGE SCALE ANALYSIS]</scope>
    <source>
        <tissue>Lymphoblast</tissue>
    </source>
</reference>
<reference key="11">
    <citation type="journal article" date="2004" name="Anal. Chem.">
        <title>Robust phosphoproteomic profiling of tyrosine phosphorylation sites from human T cells using immobilized metal affinity chromatography and tandem mass spectrometry.</title>
        <authorList>
            <person name="Brill L.M."/>
            <person name="Salomon A.R."/>
            <person name="Ficarro S.B."/>
            <person name="Mukherji M."/>
            <person name="Stettler-Gill M."/>
            <person name="Peters E.C."/>
        </authorList>
    </citation>
    <scope>PHOSPHORYLATION [LARGE SCALE ANALYSIS] AT TYR-6</scope>
    <scope>IDENTIFICATION BY MASS SPECTROMETRY [LARGE SCALE ANALYSIS]</scope>
    <source>
        <tissue>Leukemic T-cell</tissue>
    </source>
</reference>
<reference key="12">
    <citation type="journal article" date="2008" name="Proc. Natl. Acad. Sci. U.S.A.">
        <title>A quantitative atlas of mitotic phosphorylation.</title>
        <authorList>
            <person name="Dephoure N."/>
            <person name="Zhou C."/>
            <person name="Villen J."/>
            <person name="Beausoleil S.A."/>
            <person name="Bakalarski C.E."/>
            <person name="Elledge S.J."/>
            <person name="Gygi S.P."/>
        </authorList>
    </citation>
    <scope>IDENTIFICATION BY MASS SPECTROMETRY [LARGE SCALE ANALYSIS]</scope>
    <source>
        <tissue>Cervix carcinoma</tissue>
    </source>
</reference>
<reference key="13">
    <citation type="journal article" date="2009" name="Sci. Signal.">
        <title>Quantitative phosphoproteomic analysis of T cell receptor signaling reveals system-wide modulation of protein-protein interactions.</title>
        <authorList>
            <person name="Mayya V."/>
            <person name="Lundgren D.H."/>
            <person name="Hwang S.-I."/>
            <person name="Rezaul K."/>
            <person name="Wu L."/>
            <person name="Eng J.K."/>
            <person name="Rodionov V."/>
            <person name="Han D.K."/>
        </authorList>
    </citation>
    <scope>PHOSPHORYLATION [LARGE SCALE ANALYSIS] AT SER-83</scope>
    <scope>IDENTIFICATION BY MASS SPECTROMETRY [LARGE SCALE ANALYSIS]</scope>
    <source>
        <tissue>Leukemic T-cell</tissue>
    </source>
</reference>
<reference key="14">
    <citation type="journal article" date="2010" name="J. Biol. Chem.">
        <title>A protein interaction network for Ecm29 links the 26 S proteasome to molecular motors and endosomal components.</title>
        <authorList>
            <person name="Gorbea C."/>
            <person name="Pratt G."/>
            <person name="Ustrell V."/>
            <person name="Bell R."/>
            <person name="Sahasrabudhe S."/>
            <person name="Hughes R.E."/>
            <person name="Rechsteiner M."/>
        </authorList>
    </citation>
    <scope>INTERACTION WITH ECPAS</scope>
</reference>
<reference key="15">
    <citation type="journal article" date="2010" name="Mol. Cancer Ther.">
        <title>A novel human dynactin-associated protein, dynAP, promotes activation of Akt, and ergosterol-related compounds induce dynAP-dependent apoptosis of human cancer cells.</title>
        <authorList>
            <person name="Kunoh T."/>
            <person name="Noda T."/>
            <person name="Koseki K."/>
            <person name="Sekigawa M."/>
            <person name="Takagi M."/>
            <person name="Shin-ya K."/>
            <person name="Goshima N."/>
            <person name="Iemura S."/>
            <person name="Natsume T."/>
            <person name="Wada S."/>
            <person name="Mukai Y."/>
            <person name="Ohta S."/>
            <person name="Sasaki R."/>
            <person name="Mizukami T."/>
        </authorList>
    </citation>
    <scope>INTERACTION WITH DYNAP</scope>
</reference>
<reference key="16">
    <citation type="journal article" date="2010" name="Sci. Signal.">
        <title>Quantitative phosphoproteomics reveals widespread full phosphorylation site occupancy during mitosis.</title>
        <authorList>
            <person name="Olsen J.V."/>
            <person name="Vermeulen M."/>
            <person name="Santamaria A."/>
            <person name="Kumar C."/>
            <person name="Miller M.L."/>
            <person name="Jensen L.J."/>
            <person name="Gnad F."/>
            <person name="Cox J."/>
            <person name="Jensen T.S."/>
            <person name="Nigg E.A."/>
            <person name="Brunak S."/>
            <person name="Mann M."/>
        </authorList>
    </citation>
    <scope>IDENTIFICATION BY MASS SPECTROMETRY [LARGE SCALE ANALYSIS]</scope>
    <source>
        <tissue>Cervix carcinoma</tissue>
    </source>
</reference>
<reference key="17">
    <citation type="journal article" date="2011" name="BMC Syst. Biol.">
        <title>Initial characterization of the human central proteome.</title>
        <authorList>
            <person name="Burkard T.R."/>
            <person name="Planyavsky M."/>
            <person name="Kaupe I."/>
            <person name="Breitwieser F.P."/>
            <person name="Buerckstuemmer T."/>
            <person name="Bennett K.L."/>
            <person name="Superti-Furga G."/>
            <person name="Colinge J."/>
        </authorList>
    </citation>
    <scope>IDENTIFICATION BY MASS SPECTROMETRY [LARGE SCALE ANALYSIS]</scope>
</reference>
<reference key="18">
    <citation type="journal article" date="2012" name="J. Proteome Res.">
        <title>Resveratrol-induced changes of the human adipocyte secretion profile.</title>
        <authorList>
            <person name="Rosenow A."/>
            <person name="Noben J.P."/>
            <person name="Jocken J."/>
            <person name="Kallendrusch S."/>
            <person name="Fischer-Posovszky P."/>
            <person name="Mariman E.C."/>
            <person name="Renes J."/>
        </authorList>
    </citation>
    <scope>IDENTIFICATION BY MASS SPECTROMETRY [LARGE SCALE ANALYSIS]</scope>
</reference>
<reference key="19">
    <citation type="journal article" date="2012" name="Proc. Natl. Acad. Sci. U.S.A.">
        <title>N-terminal acetylome analyses and functional insights of the N-terminal acetyltransferase NatB.</title>
        <authorList>
            <person name="Van Damme P."/>
            <person name="Lasa M."/>
            <person name="Polevoda B."/>
            <person name="Gazquez C."/>
            <person name="Elosegui-Artola A."/>
            <person name="Kim D.S."/>
            <person name="De Juan-Pardo E."/>
            <person name="Demeyer K."/>
            <person name="Hole K."/>
            <person name="Larrea E."/>
            <person name="Timmerman E."/>
            <person name="Prieto J."/>
            <person name="Arnesen T."/>
            <person name="Sherman F."/>
            <person name="Gevaert K."/>
            <person name="Aldabe R."/>
        </authorList>
    </citation>
    <scope>ACETYLATION [LARGE SCALE ANALYSIS] AT ALA-2</scope>
    <scope>CLEAVAGE OF INITIATOR METHIONINE [LARGE SCALE ANALYSIS]</scope>
    <scope>IDENTIFICATION BY MASS SPECTROMETRY [LARGE SCALE ANALYSIS]</scope>
</reference>
<reference key="20">
    <citation type="journal article" date="2013" name="J. Proteome Res.">
        <title>Toward a comprehensive characterization of a human cancer cell phosphoproteome.</title>
        <authorList>
            <person name="Zhou H."/>
            <person name="Di Palma S."/>
            <person name="Preisinger C."/>
            <person name="Peng M."/>
            <person name="Polat A.N."/>
            <person name="Heck A.J."/>
            <person name="Mohammed S."/>
        </authorList>
    </citation>
    <scope>PHOSPHORYLATION [LARGE SCALE ANALYSIS] AT SER-83; THR-134 AND THR-198</scope>
    <scope>IDENTIFICATION BY MASS SPECTROMETRY [LARGE SCALE ANALYSIS]</scope>
    <source>
        <tissue>Cervix carcinoma</tissue>
        <tissue>Erythroleukemia</tissue>
    </source>
</reference>
<reference key="21">
    <citation type="journal article" date="2014" name="J. Proteomics">
        <title>An enzyme assisted RP-RPLC approach for in-depth analysis of human liver phosphoproteome.</title>
        <authorList>
            <person name="Bian Y."/>
            <person name="Song C."/>
            <person name="Cheng K."/>
            <person name="Dong M."/>
            <person name="Wang F."/>
            <person name="Huang J."/>
            <person name="Sun D."/>
            <person name="Wang L."/>
            <person name="Ye M."/>
            <person name="Zou H."/>
        </authorList>
    </citation>
    <scope>IDENTIFICATION BY MASS SPECTROMETRY [LARGE SCALE ANALYSIS]</scope>
    <source>
        <tissue>Liver</tissue>
    </source>
</reference>
<keyword id="KW-0007">Acetylation</keyword>
<keyword id="KW-0025">Alternative splicing</keyword>
<keyword id="KW-0175">Coiled coil</keyword>
<keyword id="KW-0963">Cytoplasm</keyword>
<keyword id="KW-0206">Cytoskeleton</keyword>
<keyword id="KW-0903">Direct protein sequencing</keyword>
<keyword id="KW-0243">Dynein</keyword>
<keyword id="KW-0472">Membrane</keyword>
<keyword id="KW-0493">Microtubule</keyword>
<keyword id="KW-0597">Phosphoprotein</keyword>
<keyword id="KW-1267">Proteomics identification</keyword>
<keyword id="KW-1185">Reference proteome</keyword>
<feature type="initiator methionine" description="Removed" evidence="6 11 19">
    <location>
        <position position="1"/>
    </location>
</feature>
<feature type="chain" id="PRO_0000079821" description="Dynactin subunit 2">
    <location>
        <begin position="2"/>
        <end position="401"/>
    </location>
</feature>
<feature type="region of interest" description="Disordered" evidence="4">
    <location>
        <begin position="1"/>
        <end position="25"/>
    </location>
</feature>
<feature type="coiled-coil region" evidence="3">
    <location>
        <begin position="99"/>
        <end position="132"/>
    </location>
</feature>
<feature type="coiled-coil region" evidence="3">
    <location>
        <begin position="214"/>
        <end position="244"/>
    </location>
</feature>
<feature type="coiled-coil region" evidence="3">
    <location>
        <begin position="379"/>
        <end position="399"/>
    </location>
</feature>
<feature type="modified residue" description="N-acetylalanine" evidence="11 19">
    <location>
        <position position="2"/>
    </location>
</feature>
<feature type="modified residue" description="Phosphotyrosine" evidence="17">
    <location>
        <position position="6"/>
    </location>
</feature>
<feature type="modified residue" description="Phosphoserine" evidence="18 20">
    <location>
        <position position="83"/>
    </location>
</feature>
<feature type="modified residue" description="Phosphotyrosine" evidence="2">
    <location>
        <position position="86"/>
    </location>
</feature>
<feature type="modified residue" description="Phosphothreonine" evidence="20">
    <location>
        <position position="134"/>
    </location>
</feature>
<feature type="modified residue" description="Phosphothreonine" evidence="20">
    <location>
        <position position="198"/>
    </location>
</feature>
<feature type="modified residue" description="Phosphoserine" evidence="2">
    <location>
        <position position="320"/>
    </location>
</feature>
<feature type="splice variant" id="VSP_040485" description="In isoform 2." evidence="12 13">
    <original>A</original>
    <variation>AFAQEL</variation>
    <location>
        <position position="35"/>
    </location>
</feature>
<feature type="splice variant" id="VSP_040486" description="In isoform 3." evidence="14">
    <original>A</original>
    <variation>AEL</variation>
    <location>
        <position position="35"/>
    </location>
</feature>